<accession>Q8EWV0</accession>
<reference key="1">
    <citation type="journal article" date="2002" name="Nucleic Acids Res.">
        <title>The complete genomic sequence of Mycoplasma penetrans, an intracellular bacterial pathogen in humans.</title>
        <authorList>
            <person name="Sasaki Y."/>
            <person name="Ishikawa J."/>
            <person name="Yamashita A."/>
            <person name="Oshima K."/>
            <person name="Kenri T."/>
            <person name="Furuya K."/>
            <person name="Yoshino C."/>
            <person name="Horino A."/>
            <person name="Shiba T."/>
            <person name="Sasaki T."/>
            <person name="Hattori M."/>
        </authorList>
    </citation>
    <scope>NUCLEOTIDE SEQUENCE [LARGE SCALE GENOMIC DNA]</scope>
    <source>
        <strain>HF-2</strain>
    </source>
</reference>
<name>RS16_MALP2</name>
<gene>
    <name evidence="1" type="primary">rpsP</name>
    <name type="ordered locus">MYPE1010</name>
</gene>
<feature type="chain" id="PRO_0000167210" description="Small ribosomal subunit protein bS16">
    <location>
        <begin position="1"/>
        <end position="132"/>
    </location>
</feature>
<feature type="region of interest" description="Disordered" evidence="2">
    <location>
        <begin position="82"/>
        <end position="132"/>
    </location>
</feature>
<feature type="compositionally biased region" description="Basic and acidic residues" evidence="2">
    <location>
        <begin position="82"/>
        <end position="107"/>
    </location>
</feature>
<feature type="compositionally biased region" description="Low complexity" evidence="2">
    <location>
        <begin position="108"/>
        <end position="132"/>
    </location>
</feature>
<evidence type="ECO:0000255" key="1">
    <source>
        <dbReference type="HAMAP-Rule" id="MF_00385"/>
    </source>
</evidence>
<evidence type="ECO:0000256" key="2">
    <source>
        <dbReference type="SAM" id="MobiDB-lite"/>
    </source>
</evidence>
<evidence type="ECO:0000305" key="3"/>
<sequence>MVKIRLTRLGRHKLPFFRIVVIDSRARRDGAYIEKVGTYEPFEGVVNINEEIALSWLKKGAQPSDTVKNLLREQGVWKKFMDSKVQSKKEHNANKVKKEVKKPEAKKAAASKPASKPSASKSASQKKTVSKK</sequence>
<dbReference type="EMBL" id="BA000026">
    <property type="protein sequence ID" value="BAC43892.1"/>
    <property type="molecule type" value="Genomic_DNA"/>
</dbReference>
<dbReference type="SMR" id="Q8EWV0"/>
<dbReference type="FunCoup" id="Q8EWV0">
    <property type="interactions" value="258"/>
</dbReference>
<dbReference type="STRING" id="272633.gene:10731193"/>
<dbReference type="KEGG" id="mpe:MYPE1010"/>
<dbReference type="eggNOG" id="COG0228">
    <property type="taxonomic scope" value="Bacteria"/>
</dbReference>
<dbReference type="HOGENOM" id="CLU_100590_3_2_14"/>
<dbReference type="InParanoid" id="Q8EWV0"/>
<dbReference type="Proteomes" id="UP000002522">
    <property type="component" value="Chromosome"/>
</dbReference>
<dbReference type="GO" id="GO:0005737">
    <property type="term" value="C:cytoplasm"/>
    <property type="evidence" value="ECO:0007669"/>
    <property type="project" value="UniProtKB-ARBA"/>
</dbReference>
<dbReference type="GO" id="GO:0015935">
    <property type="term" value="C:small ribosomal subunit"/>
    <property type="evidence" value="ECO:0007669"/>
    <property type="project" value="TreeGrafter"/>
</dbReference>
<dbReference type="GO" id="GO:0003735">
    <property type="term" value="F:structural constituent of ribosome"/>
    <property type="evidence" value="ECO:0007669"/>
    <property type="project" value="InterPro"/>
</dbReference>
<dbReference type="GO" id="GO:0006412">
    <property type="term" value="P:translation"/>
    <property type="evidence" value="ECO:0007669"/>
    <property type="project" value="UniProtKB-UniRule"/>
</dbReference>
<dbReference type="Gene3D" id="3.30.1320.10">
    <property type="match status" value="1"/>
</dbReference>
<dbReference type="HAMAP" id="MF_00385">
    <property type="entry name" value="Ribosomal_bS16"/>
    <property type="match status" value="1"/>
</dbReference>
<dbReference type="InterPro" id="IPR000307">
    <property type="entry name" value="Ribosomal_bS16"/>
</dbReference>
<dbReference type="InterPro" id="IPR020592">
    <property type="entry name" value="Ribosomal_bS16_CS"/>
</dbReference>
<dbReference type="InterPro" id="IPR023803">
    <property type="entry name" value="Ribosomal_bS16_dom_sf"/>
</dbReference>
<dbReference type="NCBIfam" id="TIGR00002">
    <property type="entry name" value="S16"/>
    <property type="match status" value="1"/>
</dbReference>
<dbReference type="PANTHER" id="PTHR12919">
    <property type="entry name" value="30S RIBOSOMAL PROTEIN S16"/>
    <property type="match status" value="1"/>
</dbReference>
<dbReference type="PANTHER" id="PTHR12919:SF20">
    <property type="entry name" value="SMALL RIBOSOMAL SUBUNIT PROTEIN BS16M"/>
    <property type="match status" value="1"/>
</dbReference>
<dbReference type="Pfam" id="PF00886">
    <property type="entry name" value="Ribosomal_S16"/>
    <property type="match status" value="1"/>
</dbReference>
<dbReference type="SUPFAM" id="SSF54565">
    <property type="entry name" value="Ribosomal protein S16"/>
    <property type="match status" value="1"/>
</dbReference>
<dbReference type="PROSITE" id="PS00732">
    <property type="entry name" value="RIBOSOMAL_S16"/>
    <property type="match status" value="1"/>
</dbReference>
<proteinExistence type="inferred from homology"/>
<protein>
    <recommendedName>
        <fullName evidence="1">Small ribosomal subunit protein bS16</fullName>
    </recommendedName>
    <alternativeName>
        <fullName evidence="3">30S ribosomal protein S16</fullName>
    </alternativeName>
</protein>
<keyword id="KW-1185">Reference proteome</keyword>
<keyword id="KW-0687">Ribonucleoprotein</keyword>
<keyword id="KW-0689">Ribosomal protein</keyword>
<organism>
    <name type="scientific">Malacoplasma penetrans (strain HF-2)</name>
    <name type="common">Mycoplasma penetrans</name>
    <dbReference type="NCBI Taxonomy" id="272633"/>
    <lineage>
        <taxon>Bacteria</taxon>
        <taxon>Bacillati</taxon>
        <taxon>Mycoplasmatota</taxon>
        <taxon>Mycoplasmoidales</taxon>
        <taxon>Mycoplasmoidaceae</taxon>
        <taxon>Malacoplasma</taxon>
    </lineage>
</organism>
<comment type="similarity">
    <text evidence="1">Belongs to the bacterial ribosomal protein bS16 family.</text>
</comment>